<reference key="1">
    <citation type="journal article" date="1995" name="Science">
        <title>Whole-genome random sequencing and assembly of Haemophilus influenzae Rd.</title>
        <authorList>
            <person name="Fleischmann R.D."/>
            <person name="Adams M.D."/>
            <person name="White O."/>
            <person name="Clayton R.A."/>
            <person name="Kirkness E.F."/>
            <person name="Kerlavage A.R."/>
            <person name="Bult C.J."/>
            <person name="Tomb J.-F."/>
            <person name="Dougherty B.A."/>
            <person name="Merrick J.M."/>
            <person name="McKenney K."/>
            <person name="Sutton G.G."/>
            <person name="FitzHugh W."/>
            <person name="Fields C.A."/>
            <person name="Gocayne J.D."/>
            <person name="Scott J.D."/>
            <person name="Shirley R."/>
            <person name="Liu L.-I."/>
            <person name="Glodek A."/>
            <person name="Kelley J.M."/>
            <person name="Weidman J.F."/>
            <person name="Phillips C.A."/>
            <person name="Spriggs T."/>
            <person name="Hedblom E."/>
            <person name="Cotton M.D."/>
            <person name="Utterback T.R."/>
            <person name="Hanna M.C."/>
            <person name="Nguyen D.T."/>
            <person name="Saudek D.M."/>
            <person name="Brandon R.C."/>
            <person name="Fine L.D."/>
            <person name="Fritchman J.L."/>
            <person name="Fuhrmann J.L."/>
            <person name="Geoghagen N.S.M."/>
            <person name="Gnehm C.L."/>
            <person name="McDonald L.A."/>
            <person name="Small K.V."/>
            <person name="Fraser C.M."/>
            <person name="Smith H.O."/>
            <person name="Venter J.C."/>
        </authorList>
    </citation>
    <scope>NUCLEOTIDE SEQUENCE [LARGE SCALE GENOMIC DNA]</scope>
    <source>
        <strain>ATCC 51907 / DSM 11121 / KW20 / Rd</strain>
    </source>
</reference>
<keyword id="KW-0067">ATP-binding</keyword>
<keyword id="KW-0418">Kinase</keyword>
<keyword id="KW-0547">Nucleotide-binding</keyword>
<keyword id="KW-1185">Reference proteome</keyword>
<keyword id="KW-0784">Thiamine biosynthesis</keyword>
<keyword id="KW-0808">Transferase</keyword>
<comment type="function">
    <text evidence="2">Catalyzes the phosphorylation of hydroxymethylpyrimidine phosphate (HMP-P) to HMP-PP, and of HMP to HMP-P.</text>
</comment>
<comment type="catalytic activity">
    <reaction evidence="2">
        <text>4-amino-5-hydroxymethyl-2-methylpyrimidine + ATP = 4-amino-2-methyl-5-(phosphooxymethyl)pyrimidine + ADP + H(+)</text>
        <dbReference type="Rhea" id="RHEA:23096"/>
        <dbReference type="ChEBI" id="CHEBI:15378"/>
        <dbReference type="ChEBI" id="CHEBI:16892"/>
        <dbReference type="ChEBI" id="CHEBI:30616"/>
        <dbReference type="ChEBI" id="CHEBI:58354"/>
        <dbReference type="ChEBI" id="CHEBI:456216"/>
        <dbReference type="EC" id="2.7.1.49"/>
    </reaction>
</comment>
<comment type="catalytic activity">
    <reaction evidence="2">
        <text>4-amino-2-methyl-5-(phosphooxymethyl)pyrimidine + ATP = 4-amino-2-methyl-5-(diphosphooxymethyl)pyrimidine + ADP</text>
        <dbReference type="Rhea" id="RHEA:19893"/>
        <dbReference type="ChEBI" id="CHEBI:30616"/>
        <dbReference type="ChEBI" id="CHEBI:57841"/>
        <dbReference type="ChEBI" id="CHEBI:58354"/>
        <dbReference type="ChEBI" id="CHEBI:456216"/>
        <dbReference type="EC" id="2.7.4.7"/>
    </reaction>
</comment>
<comment type="pathway">
    <text>Cofactor biosynthesis; thiamine diphosphate biosynthesis; 4-amino-2-methyl-5-diphosphomethylpyrimidine from 5-amino-1-(5-phospho-D-ribosyl)imidazole: step 2/3.</text>
</comment>
<comment type="pathway">
    <text>Cofactor biosynthesis; thiamine diphosphate biosynthesis; 4-amino-2-methyl-5-diphosphomethylpyrimidine from 5-amino-1-(5-phospho-D-ribosyl)imidazole: step 3/3.</text>
</comment>
<comment type="similarity">
    <text evidence="3">Belongs to the ThiD family.</text>
</comment>
<evidence type="ECO:0000250" key="1"/>
<evidence type="ECO:0000250" key="2">
    <source>
        <dbReference type="UniProtKB" id="P76422"/>
    </source>
</evidence>
<evidence type="ECO:0000305" key="3"/>
<name>THID_HAEIN</name>
<sequence length="269" mass="28295">MSNVKQVLTIAGSDSGGGAGIQADLKTFQMRGVFGTSAITAVTAQNTLGVFDIHPIPLKTIQAQLEAVKNDFQIASCKIGMLGNAEIIECVADFLADKPFGTLVLDPVMIAKGGAPLLQRQAVSALSQKLLPLADVITPNIPEAEALTGIAIVDDISIQQAAKALQKQGAKNVIIKGGHSLNSQSELCQDWVLLADGRHFTLQSPRFNTPHTHGTGCTFSACLTAELAKGEPLQSAVKTAKDFITAAISHPLNIGQGHGPTNHWAYSRL</sequence>
<organism>
    <name type="scientific">Haemophilus influenzae (strain ATCC 51907 / DSM 11121 / KW20 / Rd)</name>
    <dbReference type="NCBI Taxonomy" id="71421"/>
    <lineage>
        <taxon>Bacteria</taxon>
        <taxon>Pseudomonadati</taxon>
        <taxon>Pseudomonadota</taxon>
        <taxon>Gammaproteobacteria</taxon>
        <taxon>Pasteurellales</taxon>
        <taxon>Pasteurellaceae</taxon>
        <taxon>Haemophilus</taxon>
    </lineage>
</organism>
<dbReference type="EC" id="2.7.1.49" evidence="2"/>
<dbReference type="EC" id="2.7.4.7" evidence="2"/>
<dbReference type="EMBL" id="L42023">
    <property type="protein sequence ID" value="AAC22074.1"/>
    <property type="molecule type" value="Genomic_DNA"/>
</dbReference>
<dbReference type="PIR" id="I64151">
    <property type="entry name" value="I64151"/>
</dbReference>
<dbReference type="RefSeq" id="NP_438578.1">
    <property type="nucleotide sequence ID" value="NC_000907.1"/>
</dbReference>
<dbReference type="SMR" id="P44697"/>
<dbReference type="STRING" id="71421.HI_0416"/>
<dbReference type="EnsemblBacteria" id="AAC22074">
    <property type="protein sequence ID" value="AAC22074"/>
    <property type="gene ID" value="HI_0416"/>
</dbReference>
<dbReference type="KEGG" id="hin:HI_0416"/>
<dbReference type="PATRIC" id="fig|71421.8.peg.436"/>
<dbReference type="eggNOG" id="COG0351">
    <property type="taxonomic scope" value="Bacteria"/>
</dbReference>
<dbReference type="HOGENOM" id="CLU_020520_0_0_6"/>
<dbReference type="OrthoDB" id="9810880at2"/>
<dbReference type="PhylomeDB" id="P44697"/>
<dbReference type="BioCyc" id="HINF71421:G1GJ1-431-MONOMER"/>
<dbReference type="UniPathway" id="UPA00060">
    <property type="reaction ID" value="UER00137"/>
</dbReference>
<dbReference type="UniPathway" id="UPA00060">
    <property type="reaction ID" value="UER00138"/>
</dbReference>
<dbReference type="Proteomes" id="UP000000579">
    <property type="component" value="Chromosome"/>
</dbReference>
<dbReference type="GO" id="GO:0005829">
    <property type="term" value="C:cytosol"/>
    <property type="evidence" value="ECO:0000318"/>
    <property type="project" value="GO_Central"/>
</dbReference>
<dbReference type="GO" id="GO:0005524">
    <property type="term" value="F:ATP binding"/>
    <property type="evidence" value="ECO:0007669"/>
    <property type="project" value="UniProtKB-KW"/>
</dbReference>
<dbReference type="GO" id="GO:0008902">
    <property type="term" value="F:hydroxymethylpyrimidine kinase activity"/>
    <property type="evidence" value="ECO:0000318"/>
    <property type="project" value="GO_Central"/>
</dbReference>
<dbReference type="GO" id="GO:0008972">
    <property type="term" value="F:phosphomethylpyrimidine kinase activity"/>
    <property type="evidence" value="ECO:0000318"/>
    <property type="project" value="GO_Central"/>
</dbReference>
<dbReference type="GO" id="GO:0009228">
    <property type="term" value="P:thiamine biosynthetic process"/>
    <property type="evidence" value="ECO:0000318"/>
    <property type="project" value="GO_Central"/>
</dbReference>
<dbReference type="GO" id="GO:0009229">
    <property type="term" value="P:thiamine diphosphate biosynthetic process"/>
    <property type="evidence" value="ECO:0007669"/>
    <property type="project" value="UniProtKB-UniPathway"/>
</dbReference>
<dbReference type="CDD" id="cd01169">
    <property type="entry name" value="HMPP_kinase"/>
    <property type="match status" value="1"/>
</dbReference>
<dbReference type="FunFam" id="3.40.1190.20:FF:000003">
    <property type="entry name" value="Phosphomethylpyrimidine kinase ThiD"/>
    <property type="match status" value="1"/>
</dbReference>
<dbReference type="Gene3D" id="3.40.1190.20">
    <property type="match status" value="1"/>
</dbReference>
<dbReference type="InterPro" id="IPR004399">
    <property type="entry name" value="HMP/HMP-P_kinase_dom"/>
</dbReference>
<dbReference type="InterPro" id="IPR013749">
    <property type="entry name" value="PM/HMP-P_kinase-1"/>
</dbReference>
<dbReference type="InterPro" id="IPR029056">
    <property type="entry name" value="Ribokinase-like"/>
</dbReference>
<dbReference type="NCBIfam" id="TIGR00097">
    <property type="entry name" value="HMP-P_kinase"/>
    <property type="match status" value="1"/>
</dbReference>
<dbReference type="PANTHER" id="PTHR20858:SF17">
    <property type="entry name" value="HYDROXYMETHYLPYRIMIDINE_PHOSPHOMETHYLPYRIMIDINE KINASE THI20-RELATED"/>
    <property type="match status" value="1"/>
</dbReference>
<dbReference type="PANTHER" id="PTHR20858">
    <property type="entry name" value="PHOSPHOMETHYLPYRIMIDINE KINASE"/>
    <property type="match status" value="1"/>
</dbReference>
<dbReference type="Pfam" id="PF08543">
    <property type="entry name" value="Phos_pyr_kin"/>
    <property type="match status" value="1"/>
</dbReference>
<dbReference type="SUPFAM" id="SSF53613">
    <property type="entry name" value="Ribokinase-like"/>
    <property type="match status" value="1"/>
</dbReference>
<gene>
    <name type="primary">thiD</name>
    <name type="ordered locus">HI_0416</name>
</gene>
<protein>
    <recommendedName>
        <fullName>Hydroxymethylpyrimidine/phosphomethylpyrimidine kinase</fullName>
        <ecNumber evidence="2">2.7.1.49</ecNumber>
        <ecNumber evidence="2">2.7.4.7</ecNumber>
    </recommendedName>
    <alternativeName>
        <fullName>Hydroxymethylpyrimidine kinase</fullName>
        <shortName>HMP kinase</shortName>
    </alternativeName>
    <alternativeName>
        <fullName>Hydroxymethylpyrimidine phosphate kinase</fullName>
        <shortName>HMP-P kinase</shortName>
        <shortName>HMP-phosphate kinase</shortName>
        <shortName>HMPP kinase</shortName>
    </alternativeName>
</protein>
<proteinExistence type="inferred from homology"/>
<accession>P44697</accession>
<feature type="chain" id="PRO_0000192019" description="Hydroxymethylpyrimidine/phosphomethylpyrimidine kinase">
    <location>
        <begin position="1"/>
        <end position="269"/>
    </location>
</feature>
<feature type="binding site" evidence="1">
    <location>
        <position position="45"/>
    </location>
    <ligand>
        <name>4-amino-5-hydroxymethyl-2-methylpyrimidine</name>
        <dbReference type="ChEBI" id="CHEBI:16892"/>
    </ligand>
</feature>